<comment type="function">
    <text evidence="1">A cholesterol-dependent toxin that causes cytolysis by forming pores in cholesterol containing host membranes. After binding to target membranes, the protein undergoes a major conformation change, leading to its insertion in the host membrane and formation of an oligomeric pore complex. Cholesterol is required for binding to host membranes, membrane insertion and pore formation; cholesterol binding is mediated by a Thr-Leu pair in the C-terminus. Can be reversibly inactivated by oxidation.</text>
</comment>
<comment type="subunit">
    <text evidence="3">Homooligomeric pore complex of 35 to 50 subunits; when inserted in the host membrane.</text>
</comment>
<comment type="subcellular location">
    <subcellularLocation>
        <location evidence="2">Secreted</location>
    </subcellularLocation>
    <subcellularLocation>
        <location evidence="2">Host membrane</location>
        <topology evidence="3">Multi-pass membrane protein</topology>
    </subcellularLocation>
    <text evidence="3">Secreted as soluble protein that then inserts into the host membrane and forms pores formed by transmembrane beta-strands.</text>
</comment>
<comment type="similarity">
    <text evidence="5">Belongs to the cholesterol-dependent cytolysin family.</text>
</comment>
<proteinExistence type="inferred from homology"/>
<sequence>MKKIMLLLMTLLLVSLPLAQEAQADASVYSYQGIISHMAPPASPPAKPKTPVEKKNAAQIDQYIQGLDYDKNNILVYDGEAVKNVPPKAGYKEGNQYIVVEKKKKSINQNNADIQVINSLASLTYPGALVKANSELVENQPDVLPVKRDSVTLSIDLPGMVNHDNEIVVQNATKSNINDGVNTLVDRWNNKYSEEYPNISAKIDYDQEMAYSESQLVAKFGAAFKAVNNSLNVNFGAISEGKVQEEVINFKQIYYTVNVNEPTSPSRFFGKSVTKENLQALGVNAENPPAYISSVAYGRDIFVKLSTSSHSTRVKAAFDTAFKGKSVKGDTELENIIQNASFKAVIYGGSAKDEVEIIDGDLSKLRDILKQGANFDKKNPGVPIAYTTNFLKDNQLAVVKNNSEYIETTSKAYSDGKINLDHSGAYVARFNVTWDEVSYDANGNEVVEHKKWSENDKDKLAHFTTSIYLPGNARNINIHAKECTGLAWEWWRTVVDDRNLPLVKNRNVCIWGTTLYPAYSDTVDNPIK</sequence>
<accession>P31831</accession>
<dbReference type="EMBL" id="X60461">
    <property type="protein sequence ID" value="CAA42995.2"/>
    <property type="molecule type" value="Genomic_DNA"/>
</dbReference>
<dbReference type="PIR" id="S22341">
    <property type="entry name" value="S22341"/>
</dbReference>
<dbReference type="SMR" id="P31831"/>
<dbReference type="TCDB" id="1.C.12.1.6">
    <property type="family name" value="the thiol-activated cholesterol-dependent cytolysin (cdc) family"/>
</dbReference>
<dbReference type="GO" id="GO:0005576">
    <property type="term" value="C:extracellular region"/>
    <property type="evidence" value="ECO:0007669"/>
    <property type="project" value="UniProtKB-SubCell"/>
</dbReference>
<dbReference type="GO" id="GO:0033644">
    <property type="term" value="C:host cell membrane"/>
    <property type="evidence" value="ECO:0007669"/>
    <property type="project" value="UniProtKB-SubCell"/>
</dbReference>
<dbReference type="GO" id="GO:0016020">
    <property type="term" value="C:membrane"/>
    <property type="evidence" value="ECO:0007669"/>
    <property type="project" value="UniProtKB-KW"/>
</dbReference>
<dbReference type="GO" id="GO:0015485">
    <property type="term" value="F:cholesterol binding"/>
    <property type="evidence" value="ECO:0007669"/>
    <property type="project" value="InterPro"/>
</dbReference>
<dbReference type="GO" id="GO:0090729">
    <property type="term" value="F:toxin activity"/>
    <property type="evidence" value="ECO:0007669"/>
    <property type="project" value="UniProtKB-KW"/>
</dbReference>
<dbReference type="GO" id="GO:0031640">
    <property type="term" value="P:killing of cells of another organism"/>
    <property type="evidence" value="ECO:0007669"/>
    <property type="project" value="UniProtKB-KW"/>
</dbReference>
<dbReference type="Gene3D" id="3.30.1040.20">
    <property type="match status" value="1"/>
</dbReference>
<dbReference type="Gene3D" id="3.40.30.40">
    <property type="entry name" value="Perfringolysin"/>
    <property type="match status" value="1"/>
</dbReference>
<dbReference type="Gene3D" id="2.60.40.1430">
    <property type="entry name" value="Perfringolysin, domain 4"/>
    <property type="match status" value="1"/>
</dbReference>
<dbReference type="Gene3D" id="3.90.840.10">
    <property type="entry name" value="Thiol-activated cytolysin superfamily/Thiol-activated cytolysin, alpha-beta domain"/>
    <property type="match status" value="1"/>
</dbReference>
<dbReference type="InterPro" id="IPR035390">
    <property type="entry name" value="Thiol_cytolys_C"/>
</dbReference>
<dbReference type="InterPro" id="IPR038700">
    <property type="entry name" value="Thiol_cytolys_C_sf"/>
</dbReference>
<dbReference type="InterPro" id="IPR001869">
    <property type="entry name" value="Thiol_cytolysin"/>
</dbReference>
<dbReference type="InterPro" id="IPR036363">
    <property type="entry name" value="Thiol_cytolysin_ab_sf"/>
</dbReference>
<dbReference type="InterPro" id="IPR036359">
    <property type="entry name" value="Thiol_cytolysin_sf"/>
</dbReference>
<dbReference type="Pfam" id="PF17440">
    <property type="entry name" value="Thiol_cytolys_C"/>
    <property type="match status" value="1"/>
</dbReference>
<dbReference type="Pfam" id="PF01289">
    <property type="entry name" value="Thiol_cytolysin"/>
    <property type="match status" value="1"/>
</dbReference>
<dbReference type="PRINTS" id="PR01400">
    <property type="entry name" value="TACYTOLYSIN"/>
</dbReference>
<dbReference type="SUPFAM" id="SSF56978">
    <property type="entry name" value="Perfringolysin"/>
    <property type="match status" value="1"/>
</dbReference>
<dbReference type="PROSITE" id="PS00481">
    <property type="entry name" value="THIOL_CYTOLYSINS"/>
    <property type="match status" value="1"/>
</dbReference>
<organism>
    <name type="scientific">Listeria ivanovii</name>
    <dbReference type="NCBI Taxonomy" id="1638"/>
    <lineage>
        <taxon>Bacteria</taxon>
        <taxon>Bacillati</taxon>
        <taxon>Bacillota</taxon>
        <taxon>Bacilli</taxon>
        <taxon>Bacillales</taxon>
        <taxon>Listeriaceae</taxon>
        <taxon>Listeria</taxon>
    </lineage>
</organism>
<name>TACY_LISIV</name>
<reference key="1">
    <citation type="journal article" date="1992" name="Biochim. Biophys. Acta">
        <title>Listeriolysin genes: complete sequence of ilo from Listeria ivanovii and of lso from Listeria seeligeri.</title>
        <authorList>
            <person name="Haas A."/>
            <person name="Dumbsky M."/>
            <person name="Kreft J."/>
        </authorList>
    </citation>
    <scope>NUCLEOTIDE SEQUENCE [GENOMIC DNA]</scope>
    <source>
        <strain>ATCC 19119 / DSM 20750 / BCRC 14844 / JCM 7681 / KCTC 3444 / NCTC 11846 / NRRL B-33017 / SLCC 2379 / WDCM 00018</strain>
    </source>
</reference>
<evidence type="ECO:0000250" key="1">
    <source>
        <dbReference type="UniProtKB" id="P0C2E9"/>
    </source>
</evidence>
<evidence type="ECO:0000250" key="2">
    <source>
        <dbReference type="UniProtKB" id="P13128"/>
    </source>
</evidence>
<evidence type="ECO:0000250" key="3">
    <source>
        <dbReference type="UniProtKB" id="Q04IN8"/>
    </source>
</evidence>
<evidence type="ECO:0000255" key="4"/>
<evidence type="ECO:0000305" key="5"/>
<feature type="signal peptide" evidence="4">
    <location>
        <begin position="1"/>
        <end position="23"/>
    </location>
</feature>
<feature type="chain" id="PRO_0000034100" description="Ivanolysin">
    <location>
        <begin position="24"/>
        <end position="528"/>
    </location>
</feature>
<feature type="transmembrane region" description="Beta stranded" evidence="3">
    <location>
        <begin position="213"/>
        <end position="226"/>
    </location>
</feature>
<feature type="transmembrane region" description="Beta stranded" evidence="3">
    <location>
        <begin position="233"/>
        <end position="242"/>
    </location>
</feature>
<feature type="transmembrane region" description="Beta stranded" evidence="3">
    <location>
        <begin position="311"/>
        <end position="320"/>
    </location>
</feature>
<feature type="transmembrane region" description="Beta stranded" evidence="3">
    <location>
        <begin position="328"/>
        <end position="340"/>
    </location>
</feature>
<feature type="short sequence motif" description="Conserved undecapeptide" evidence="5">
    <location>
        <begin position="482"/>
        <end position="492"/>
    </location>
</feature>
<feature type="short sequence motif" description="Cholesterol binding" evidence="1">
    <location>
        <begin position="514"/>
        <end position="515"/>
    </location>
</feature>
<keyword id="KW-0204">Cytolysis</keyword>
<keyword id="KW-0354">Hemolysis</keyword>
<keyword id="KW-1043">Host membrane</keyword>
<keyword id="KW-0446">Lipid-binding</keyword>
<keyword id="KW-0472">Membrane</keyword>
<keyword id="KW-0964">Secreted</keyword>
<keyword id="KW-0732">Signal</keyword>
<keyword id="KW-0800">Toxin</keyword>
<keyword id="KW-0812">Transmembrane</keyword>
<keyword id="KW-1134">Transmembrane beta strand</keyword>
<keyword id="KW-0843">Virulence</keyword>
<gene>
    <name type="primary">ilo</name>
</gene>
<protein>
    <recommendedName>
        <fullName>Ivanolysin</fullName>
    </recommendedName>
    <alternativeName>
        <fullName>Thiol-activated cytolysin</fullName>
    </alternativeName>
</protein>